<comment type="function">
    <text evidence="1">Binds 23S rRNA and is also seen to make contacts with the A and possibly P site tRNAs.</text>
</comment>
<comment type="subunit">
    <text evidence="1">Part of the 50S ribosomal subunit.</text>
</comment>
<comment type="similarity">
    <text evidence="1">Belongs to the universal ribosomal protein uL16 family.</text>
</comment>
<protein>
    <recommendedName>
        <fullName evidence="1">Large ribosomal subunit protein uL16</fullName>
    </recommendedName>
    <alternativeName>
        <fullName evidence="3">50S ribosomal protein L16</fullName>
    </alternativeName>
</protein>
<gene>
    <name evidence="1" type="primary">rplP</name>
    <name type="ordered locus">Swit_1346</name>
</gene>
<name>RL16_RHIWR</name>
<reference key="1">
    <citation type="journal article" date="2010" name="J. Bacteriol.">
        <title>Genome sequence of the dioxin-mineralizing bacterium Sphingomonas wittichii RW1.</title>
        <authorList>
            <person name="Miller T.R."/>
            <person name="Delcher A.L."/>
            <person name="Salzberg S.L."/>
            <person name="Saunders E."/>
            <person name="Detter J.C."/>
            <person name="Halden R.U."/>
        </authorList>
    </citation>
    <scope>NUCLEOTIDE SEQUENCE [LARGE SCALE GENOMIC DNA]</scope>
    <source>
        <strain>DSM 6014 / CCUG 31198 / JCM 15750 / NBRC 105917 / EY 4224 / RW1</strain>
    </source>
</reference>
<dbReference type="EMBL" id="CP000699">
    <property type="protein sequence ID" value="ABQ67711.1"/>
    <property type="molecule type" value="Genomic_DNA"/>
</dbReference>
<dbReference type="SMR" id="A5V5Z5"/>
<dbReference type="STRING" id="392499.Swit_1346"/>
<dbReference type="PaxDb" id="392499-Swit_1346"/>
<dbReference type="KEGG" id="swi:Swit_1346"/>
<dbReference type="eggNOG" id="COG0197">
    <property type="taxonomic scope" value="Bacteria"/>
</dbReference>
<dbReference type="HOGENOM" id="CLU_078858_2_1_5"/>
<dbReference type="OrthoDB" id="9802589at2"/>
<dbReference type="Proteomes" id="UP000001989">
    <property type="component" value="Chromosome"/>
</dbReference>
<dbReference type="GO" id="GO:0022625">
    <property type="term" value="C:cytosolic large ribosomal subunit"/>
    <property type="evidence" value="ECO:0007669"/>
    <property type="project" value="TreeGrafter"/>
</dbReference>
<dbReference type="GO" id="GO:0019843">
    <property type="term" value="F:rRNA binding"/>
    <property type="evidence" value="ECO:0007669"/>
    <property type="project" value="UniProtKB-UniRule"/>
</dbReference>
<dbReference type="GO" id="GO:0003735">
    <property type="term" value="F:structural constituent of ribosome"/>
    <property type="evidence" value="ECO:0007669"/>
    <property type="project" value="InterPro"/>
</dbReference>
<dbReference type="GO" id="GO:0000049">
    <property type="term" value="F:tRNA binding"/>
    <property type="evidence" value="ECO:0007669"/>
    <property type="project" value="UniProtKB-KW"/>
</dbReference>
<dbReference type="GO" id="GO:0006412">
    <property type="term" value="P:translation"/>
    <property type="evidence" value="ECO:0007669"/>
    <property type="project" value="UniProtKB-UniRule"/>
</dbReference>
<dbReference type="CDD" id="cd01433">
    <property type="entry name" value="Ribosomal_L16_L10e"/>
    <property type="match status" value="1"/>
</dbReference>
<dbReference type="FunFam" id="3.90.1170.10:FF:000001">
    <property type="entry name" value="50S ribosomal protein L16"/>
    <property type="match status" value="1"/>
</dbReference>
<dbReference type="Gene3D" id="3.90.1170.10">
    <property type="entry name" value="Ribosomal protein L10e/L16"/>
    <property type="match status" value="1"/>
</dbReference>
<dbReference type="HAMAP" id="MF_01342">
    <property type="entry name" value="Ribosomal_uL16"/>
    <property type="match status" value="1"/>
</dbReference>
<dbReference type="InterPro" id="IPR047873">
    <property type="entry name" value="Ribosomal_uL16"/>
</dbReference>
<dbReference type="InterPro" id="IPR000114">
    <property type="entry name" value="Ribosomal_uL16_bact-type"/>
</dbReference>
<dbReference type="InterPro" id="IPR020798">
    <property type="entry name" value="Ribosomal_uL16_CS"/>
</dbReference>
<dbReference type="InterPro" id="IPR016180">
    <property type="entry name" value="Ribosomal_uL16_dom"/>
</dbReference>
<dbReference type="InterPro" id="IPR036920">
    <property type="entry name" value="Ribosomal_uL16_sf"/>
</dbReference>
<dbReference type="NCBIfam" id="TIGR01164">
    <property type="entry name" value="rplP_bact"/>
    <property type="match status" value="1"/>
</dbReference>
<dbReference type="PANTHER" id="PTHR12220">
    <property type="entry name" value="50S/60S RIBOSOMAL PROTEIN L16"/>
    <property type="match status" value="1"/>
</dbReference>
<dbReference type="PANTHER" id="PTHR12220:SF13">
    <property type="entry name" value="LARGE RIBOSOMAL SUBUNIT PROTEIN UL16M"/>
    <property type="match status" value="1"/>
</dbReference>
<dbReference type="Pfam" id="PF00252">
    <property type="entry name" value="Ribosomal_L16"/>
    <property type="match status" value="1"/>
</dbReference>
<dbReference type="PRINTS" id="PR00060">
    <property type="entry name" value="RIBOSOMALL16"/>
</dbReference>
<dbReference type="SUPFAM" id="SSF54686">
    <property type="entry name" value="Ribosomal protein L16p/L10e"/>
    <property type="match status" value="1"/>
</dbReference>
<dbReference type="PROSITE" id="PS00586">
    <property type="entry name" value="RIBOSOMAL_L16_1"/>
    <property type="match status" value="1"/>
</dbReference>
<dbReference type="PROSITE" id="PS00701">
    <property type="entry name" value="RIBOSOMAL_L16_2"/>
    <property type="match status" value="1"/>
</dbReference>
<feature type="chain" id="PRO_1000054712" description="Large ribosomal subunit protein uL16">
    <location>
        <begin position="1"/>
        <end position="143"/>
    </location>
</feature>
<feature type="region of interest" description="Disordered" evidence="2">
    <location>
        <begin position="1"/>
        <end position="21"/>
    </location>
</feature>
<feature type="compositionally biased region" description="Basic residues" evidence="2">
    <location>
        <begin position="1"/>
        <end position="17"/>
    </location>
</feature>
<proteinExistence type="inferred from homology"/>
<evidence type="ECO:0000255" key="1">
    <source>
        <dbReference type="HAMAP-Rule" id="MF_01342"/>
    </source>
</evidence>
<evidence type="ECO:0000256" key="2">
    <source>
        <dbReference type="SAM" id="MobiDB-lite"/>
    </source>
</evidence>
<evidence type="ECO:0000305" key="3"/>
<accession>A5V5Z5</accession>
<organism>
    <name type="scientific">Rhizorhabdus wittichii (strain DSM 6014 / CCUG 31198 / JCM 15750 / NBRC 105917 / EY 4224 / RW1)</name>
    <name type="common">Sphingomonas wittichii</name>
    <dbReference type="NCBI Taxonomy" id="392499"/>
    <lineage>
        <taxon>Bacteria</taxon>
        <taxon>Pseudomonadati</taxon>
        <taxon>Pseudomonadota</taxon>
        <taxon>Alphaproteobacteria</taxon>
        <taxon>Sphingomonadales</taxon>
        <taxon>Sphingomonadaceae</taxon>
        <taxon>Rhizorhabdus</taxon>
    </lineage>
</organism>
<sequence>MLQPKRTKFRKAHKGRIHGNAPGGASLNFGAFGLKALEPDRITARQIEAARRAITRHIKRQGRLWIRIFPDVPVSSKPAEVRMGSGKGSPEFWAARVKPGRILFELDGVPGPLARVAFERAMEKLPIKTKVVARFGESIYEDK</sequence>
<keyword id="KW-1185">Reference proteome</keyword>
<keyword id="KW-0687">Ribonucleoprotein</keyword>
<keyword id="KW-0689">Ribosomal protein</keyword>
<keyword id="KW-0694">RNA-binding</keyword>
<keyword id="KW-0699">rRNA-binding</keyword>
<keyword id="KW-0820">tRNA-binding</keyword>